<organism>
    <name type="scientific">Actinobacillus pleuropneumoniae serotype 3 (strain JL03)</name>
    <dbReference type="NCBI Taxonomy" id="434271"/>
    <lineage>
        <taxon>Bacteria</taxon>
        <taxon>Pseudomonadati</taxon>
        <taxon>Pseudomonadota</taxon>
        <taxon>Gammaproteobacteria</taxon>
        <taxon>Pasteurellales</taxon>
        <taxon>Pasteurellaceae</taxon>
        <taxon>Actinobacillus</taxon>
    </lineage>
</organism>
<sequence>MTAQNENAQAQAEQVEVANEAQLEQTAEVQQEQPVEAELAAAYARINELETYIAEADNREKDIQLRAQAEIQNIRRRAEQDVEKAHKFALEKFSKELLTVVDNLERGLNALDTAVTDEKTQALVDGVEMTHKEFISTLAKFGVEAVGVVGEAFNPEVHEAISMQPAEGIEANHISVVLQKGYTLQGRVLRPAMVMVAG</sequence>
<proteinExistence type="inferred from homology"/>
<keyword id="KW-0143">Chaperone</keyword>
<keyword id="KW-0963">Cytoplasm</keyword>
<keyword id="KW-0346">Stress response</keyword>
<comment type="function">
    <text evidence="1">Participates actively in the response to hyperosmotic and heat shock by preventing the aggregation of stress-denatured proteins, in association with DnaK and GrpE. It is the nucleotide exchange factor for DnaK and may function as a thermosensor. Unfolded proteins bind initially to DnaJ; upon interaction with the DnaJ-bound protein, DnaK hydrolyzes its bound ATP, resulting in the formation of a stable complex. GrpE releases ADP from DnaK; ATP binding to DnaK triggers the release of the substrate protein, thus completing the reaction cycle. Several rounds of ATP-dependent interactions between DnaJ, DnaK and GrpE are required for fully efficient folding.</text>
</comment>
<comment type="subunit">
    <text evidence="1">Homodimer.</text>
</comment>
<comment type="subcellular location">
    <subcellularLocation>
        <location evidence="1">Cytoplasm</location>
    </subcellularLocation>
</comment>
<comment type="similarity">
    <text evidence="1">Belongs to the GrpE family.</text>
</comment>
<protein>
    <recommendedName>
        <fullName evidence="1">Protein GrpE</fullName>
    </recommendedName>
    <alternativeName>
        <fullName evidence="1">HSP-70 cofactor</fullName>
    </alternativeName>
</protein>
<accession>B0BTB9</accession>
<feature type="chain" id="PRO_1000137531" description="Protein GrpE">
    <location>
        <begin position="1"/>
        <end position="198"/>
    </location>
</feature>
<gene>
    <name evidence="1" type="primary">grpE</name>
    <name type="ordered locus">APJL_0385</name>
</gene>
<evidence type="ECO:0000255" key="1">
    <source>
        <dbReference type="HAMAP-Rule" id="MF_01151"/>
    </source>
</evidence>
<reference key="1">
    <citation type="journal article" date="2008" name="PLoS ONE">
        <title>Genome biology of Actinobacillus pleuropneumoniae JL03, an isolate of serotype 3 prevalent in China.</title>
        <authorList>
            <person name="Xu Z."/>
            <person name="Zhou Y."/>
            <person name="Li L."/>
            <person name="Zhou R."/>
            <person name="Xiao S."/>
            <person name="Wan Y."/>
            <person name="Zhang S."/>
            <person name="Wang K."/>
            <person name="Li W."/>
            <person name="Li L."/>
            <person name="Jin H."/>
            <person name="Kang M."/>
            <person name="Dalai B."/>
            <person name="Li T."/>
            <person name="Liu L."/>
            <person name="Cheng Y."/>
            <person name="Zhang L."/>
            <person name="Xu T."/>
            <person name="Zheng H."/>
            <person name="Pu S."/>
            <person name="Wang B."/>
            <person name="Gu W."/>
            <person name="Zhang X.L."/>
            <person name="Zhu G.-F."/>
            <person name="Wang S."/>
            <person name="Zhao G.-P."/>
            <person name="Chen H."/>
        </authorList>
    </citation>
    <scope>NUCLEOTIDE SEQUENCE [LARGE SCALE GENOMIC DNA]</scope>
    <source>
        <strain>JL03</strain>
    </source>
</reference>
<dbReference type="EMBL" id="CP000687">
    <property type="protein sequence ID" value="ABY68976.1"/>
    <property type="molecule type" value="Genomic_DNA"/>
</dbReference>
<dbReference type="RefSeq" id="WP_005596364.1">
    <property type="nucleotide sequence ID" value="NC_010278.1"/>
</dbReference>
<dbReference type="SMR" id="B0BTB9"/>
<dbReference type="GeneID" id="48598533"/>
<dbReference type="KEGG" id="apj:APJL_0385"/>
<dbReference type="HOGENOM" id="CLU_057217_6_0_6"/>
<dbReference type="Proteomes" id="UP000008547">
    <property type="component" value="Chromosome"/>
</dbReference>
<dbReference type="GO" id="GO:0005829">
    <property type="term" value="C:cytosol"/>
    <property type="evidence" value="ECO:0007669"/>
    <property type="project" value="TreeGrafter"/>
</dbReference>
<dbReference type="GO" id="GO:0000774">
    <property type="term" value="F:adenyl-nucleotide exchange factor activity"/>
    <property type="evidence" value="ECO:0007669"/>
    <property type="project" value="InterPro"/>
</dbReference>
<dbReference type="GO" id="GO:0042803">
    <property type="term" value="F:protein homodimerization activity"/>
    <property type="evidence" value="ECO:0007669"/>
    <property type="project" value="InterPro"/>
</dbReference>
<dbReference type="GO" id="GO:0051087">
    <property type="term" value="F:protein-folding chaperone binding"/>
    <property type="evidence" value="ECO:0007669"/>
    <property type="project" value="InterPro"/>
</dbReference>
<dbReference type="GO" id="GO:0051082">
    <property type="term" value="F:unfolded protein binding"/>
    <property type="evidence" value="ECO:0007669"/>
    <property type="project" value="TreeGrafter"/>
</dbReference>
<dbReference type="GO" id="GO:0006457">
    <property type="term" value="P:protein folding"/>
    <property type="evidence" value="ECO:0007669"/>
    <property type="project" value="InterPro"/>
</dbReference>
<dbReference type="CDD" id="cd00446">
    <property type="entry name" value="GrpE"/>
    <property type="match status" value="1"/>
</dbReference>
<dbReference type="FunFam" id="2.30.22.10:FF:000001">
    <property type="entry name" value="Protein GrpE"/>
    <property type="match status" value="1"/>
</dbReference>
<dbReference type="Gene3D" id="3.90.20.20">
    <property type="match status" value="1"/>
</dbReference>
<dbReference type="Gene3D" id="2.30.22.10">
    <property type="entry name" value="Head domain of nucleotide exchange factor GrpE"/>
    <property type="match status" value="1"/>
</dbReference>
<dbReference type="HAMAP" id="MF_01151">
    <property type="entry name" value="GrpE"/>
    <property type="match status" value="1"/>
</dbReference>
<dbReference type="InterPro" id="IPR000740">
    <property type="entry name" value="GrpE"/>
</dbReference>
<dbReference type="InterPro" id="IPR013805">
    <property type="entry name" value="GrpE_coiled_coil"/>
</dbReference>
<dbReference type="InterPro" id="IPR009012">
    <property type="entry name" value="GrpE_head"/>
</dbReference>
<dbReference type="NCBIfam" id="NF010738">
    <property type="entry name" value="PRK14140.1"/>
    <property type="match status" value="1"/>
</dbReference>
<dbReference type="NCBIfam" id="NF010748">
    <property type="entry name" value="PRK14150.1"/>
    <property type="match status" value="1"/>
</dbReference>
<dbReference type="PANTHER" id="PTHR21237">
    <property type="entry name" value="GRPE PROTEIN"/>
    <property type="match status" value="1"/>
</dbReference>
<dbReference type="PANTHER" id="PTHR21237:SF23">
    <property type="entry name" value="GRPE PROTEIN HOMOLOG, MITOCHONDRIAL"/>
    <property type="match status" value="1"/>
</dbReference>
<dbReference type="Pfam" id="PF01025">
    <property type="entry name" value="GrpE"/>
    <property type="match status" value="1"/>
</dbReference>
<dbReference type="PRINTS" id="PR00773">
    <property type="entry name" value="GRPEPROTEIN"/>
</dbReference>
<dbReference type="SUPFAM" id="SSF58014">
    <property type="entry name" value="Coiled-coil domain of nucleotide exchange factor GrpE"/>
    <property type="match status" value="1"/>
</dbReference>
<dbReference type="SUPFAM" id="SSF51064">
    <property type="entry name" value="Head domain of nucleotide exchange factor GrpE"/>
    <property type="match status" value="1"/>
</dbReference>
<dbReference type="PROSITE" id="PS01071">
    <property type="entry name" value="GRPE"/>
    <property type="match status" value="1"/>
</dbReference>
<name>GRPE_ACTPJ</name>